<name>DDX23_PONAB</name>
<keyword id="KW-0067">ATP-binding</keyword>
<keyword id="KW-0158">Chromosome</keyword>
<keyword id="KW-0347">Helicase</keyword>
<keyword id="KW-0378">Hydrolase</keyword>
<keyword id="KW-1017">Isopeptide bond</keyword>
<keyword id="KW-0507">mRNA processing</keyword>
<keyword id="KW-0508">mRNA splicing</keyword>
<keyword id="KW-0547">Nucleotide-binding</keyword>
<keyword id="KW-0539">Nucleus</keyword>
<keyword id="KW-0597">Phosphoprotein</keyword>
<keyword id="KW-1185">Reference proteome</keyword>
<keyword id="KW-0747">Spliceosome</keyword>
<keyword id="KW-0832">Ubl conjugation</keyword>
<accession>Q5RC67</accession>
<evidence type="ECO:0000250" key="1">
    <source>
        <dbReference type="UniProtKB" id="Q9BUQ8"/>
    </source>
</evidence>
<evidence type="ECO:0000255" key="2">
    <source>
        <dbReference type="PROSITE-ProRule" id="PRU00541"/>
    </source>
</evidence>
<evidence type="ECO:0000255" key="3">
    <source>
        <dbReference type="PROSITE-ProRule" id="PRU00542"/>
    </source>
</evidence>
<evidence type="ECO:0000255" key="4">
    <source>
        <dbReference type="PROSITE-ProRule" id="PRU00552"/>
    </source>
</evidence>
<evidence type="ECO:0000256" key="5">
    <source>
        <dbReference type="SAM" id="MobiDB-lite"/>
    </source>
</evidence>
<evidence type="ECO:0000305" key="6"/>
<sequence length="820" mass="95600">MAGELADKKDRDASPSKEERKRSRTPDRERDRDRDRKSSPSKDRKRHRSRDRRRGGSRSRSRSRSKSAERERRHKERERDKERDRNKKDRDRDKDGHRRDKDRKRSSLSPGRGKDFKSRKDRDSKKDEEDEHGDKKPKAQPLSLEELLAKKKAEEEAEAKPKFLSKAEREAEALKRRQQEVEERQRMLEEERKKRKQFQDLGRKMLEDPQERERRERRERMERETNGNEDEEGRQKIREEKDKSKELHAIKERYLGGIKKRRRTRHLNDRKFVFEWDASEDTSIDYNPLYKERHQVQLLGRGFIAGIDLKQQKREQSRFYGDLMEKRRTLEEKEQEEARFRKLRKKEAKQRWDDRHWSQKKLDEMTDRDWRIFREDYSITTKGGKIPNPIRSWKDSSLPPHILEVIDKCGYKEPTPIQRQAIPIGLQNRDIIGVAETGSGKTAAFLIPLLVWITTLPKIDRIEESDQGPYAIILAPTRELAQQIEEETIKFGKPLGIRTVAVIGGISREDQGFRLRMGCEIVIATPGRLIDVLENRYLVPSRCTYVVLDEADRMIDMGFEPDVQKILEHMPVSNQKPDTDEAEDPEKMLANFESGKHKYRQTVMFTATMPPAVERLARSYLRRPAVVYIGSAGKPHERVEQKVFLMSESEKRKKLLAILEQGFDPPIIIFVNQKKGCDVLAKSLEKMGYNACTLHGGKGQEQREFALSNLKAGAKDILVATDVAGRGIDIQDVSMVVNYDMAKNIEDYIHRIGRTGRAGKSGVAITFLTKEDSAVFYELKQAILESPVSSCPPELANHPDAQHKPGTILTKKRREETIFA</sequence>
<comment type="function">
    <text evidence="1">Involved in pre-mRNA splicing and its phosphorylated form (by SRPK2) is required for spliceosomal B complex formation. Independently of its spliceosome formation function, required for the suppression of incorrect R-loops formed during transcription; R-loops are composed of a DNA:RNA hybrid and the associated non-template single-stranded DNA.</text>
</comment>
<comment type="catalytic activity">
    <reaction evidence="1">
        <text>ATP + H2O = ADP + phosphate + H(+)</text>
        <dbReference type="Rhea" id="RHEA:13065"/>
        <dbReference type="ChEBI" id="CHEBI:15377"/>
        <dbReference type="ChEBI" id="CHEBI:15378"/>
        <dbReference type="ChEBI" id="CHEBI:30616"/>
        <dbReference type="ChEBI" id="CHEBI:43474"/>
        <dbReference type="ChEBI" id="CHEBI:456216"/>
        <dbReference type="EC" id="3.6.4.13"/>
    </reaction>
</comment>
<comment type="subunit">
    <text evidence="1">The phosphorylated form (by SRPK2) is a component of the U4/U6-U5 tri-snRNP complex composed of the U4, U6 and U5 snRNAs and at least PRPF3, PRPF4, PRPF6, PRPF8, PRPF31, SNRNP200, TXNL4A, WDR57, SNRNP40, DDX23, CD2BP2, PPIH, SNU13, EFTUD2, SART1 and USP39. Identified in the spliceosome C complex. Interacts with ERBB4. Interacts with ERCC6.</text>
</comment>
<comment type="subcellular location">
    <subcellularLocation>
        <location evidence="1">Nucleus</location>
    </subcellularLocation>
    <subcellularLocation>
        <location evidence="1">Chromosome</location>
    </subcellularLocation>
    <text evidence="1">During transcription, accumulates at chromatin loci where unscheduled R-loops form and colocalizes with paused 'Ser-5'-phosphorylated POLR2A/RNA polymerase II and kinase SRPK2.</text>
</comment>
<comment type="PTM">
    <text evidence="1">In vitro phosphorylated by CLK1 and U1 snRNP-associated protein kinase. Phosphorylated by SRPK2 and this phosphorylation is required for its association with the tri-snRNP (U4/U6-U5 tri-small nuclear ribonucleoproteins) and subsequent spliceosomal B complex formation. May be phosphorylated by SRPK2 on Ser residues in the SR domain; the phosphorylation is required for the removal of inappropriate R-loops during transcription.</text>
</comment>
<comment type="similarity">
    <text evidence="6">Belongs to the DEAD box helicase family. DDX23/PRP28 subfamily.</text>
</comment>
<organism>
    <name type="scientific">Pongo abelii</name>
    <name type="common">Sumatran orangutan</name>
    <name type="synonym">Pongo pygmaeus abelii</name>
    <dbReference type="NCBI Taxonomy" id="9601"/>
    <lineage>
        <taxon>Eukaryota</taxon>
        <taxon>Metazoa</taxon>
        <taxon>Chordata</taxon>
        <taxon>Craniata</taxon>
        <taxon>Vertebrata</taxon>
        <taxon>Euteleostomi</taxon>
        <taxon>Mammalia</taxon>
        <taxon>Eutheria</taxon>
        <taxon>Euarchontoglires</taxon>
        <taxon>Primates</taxon>
        <taxon>Haplorrhini</taxon>
        <taxon>Catarrhini</taxon>
        <taxon>Hominidae</taxon>
        <taxon>Pongo</taxon>
    </lineage>
</organism>
<proteinExistence type="evidence at transcript level"/>
<gene>
    <name evidence="1" type="primary">DDX23</name>
</gene>
<protein>
    <recommendedName>
        <fullName evidence="1">Probable ATP-dependent RNA helicase DDX23</fullName>
        <ecNumber evidence="6">3.6.4.13</ecNumber>
    </recommendedName>
    <alternativeName>
        <fullName>DEAD box protein 23</fullName>
    </alternativeName>
</protein>
<reference key="1">
    <citation type="submission" date="2004-11" db="EMBL/GenBank/DDBJ databases">
        <authorList>
            <consortium name="The German cDNA consortium"/>
        </authorList>
    </citation>
    <scope>NUCLEOTIDE SEQUENCE [LARGE SCALE MRNA]</scope>
    <source>
        <tissue>Brain cortex</tissue>
    </source>
</reference>
<feature type="chain" id="PRO_0000055129" description="Probable ATP-dependent RNA helicase DDX23">
    <location>
        <begin position="1"/>
        <end position="820"/>
    </location>
</feature>
<feature type="domain" description="Helicase ATP-binding" evidence="2">
    <location>
        <begin position="422"/>
        <end position="627"/>
    </location>
</feature>
<feature type="domain" description="Helicase C-terminal" evidence="3">
    <location>
        <begin position="651"/>
        <end position="799"/>
    </location>
</feature>
<feature type="region of interest" description="Disordered" evidence="5">
    <location>
        <begin position="1"/>
        <end position="244"/>
    </location>
</feature>
<feature type="short sequence motif" description="Q motif" evidence="4">
    <location>
        <begin position="391"/>
        <end position="419"/>
    </location>
</feature>
<feature type="short sequence motif" description="DEAD box" evidence="2">
    <location>
        <begin position="549"/>
        <end position="552"/>
    </location>
</feature>
<feature type="compositionally biased region" description="Basic and acidic residues" evidence="5">
    <location>
        <begin position="1"/>
        <end position="42"/>
    </location>
</feature>
<feature type="compositionally biased region" description="Basic residues" evidence="5">
    <location>
        <begin position="43"/>
        <end position="65"/>
    </location>
</feature>
<feature type="compositionally biased region" description="Basic and acidic residues" evidence="5">
    <location>
        <begin position="66"/>
        <end position="105"/>
    </location>
</feature>
<feature type="compositionally biased region" description="Basic and acidic residues" evidence="5">
    <location>
        <begin position="112"/>
        <end position="137"/>
    </location>
</feature>
<feature type="compositionally biased region" description="Basic and acidic residues" evidence="5">
    <location>
        <begin position="147"/>
        <end position="226"/>
    </location>
</feature>
<feature type="compositionally biased region" description="Basic and acidic residues" evidence="5">
    <location>
        <begin position="233"/>
        <end position="244"/>
    </location>
</feature>
<feature type="binding site" evidence="2">
    <location>
        <begin position="435"/>
        <end position="442"/>
    </location>
    <ligand>
        <name>ATP</name>
        <dbReference type="ChEBI" id="CHEBI:30616"/>
    </ligand>
</feature>
<feature type="modified residue" description="Phosphoserine" evidence="1">
    <location>
        <position position="14"/>
    </location>
</feature>
<feature type="modified residue" description="Phosphoserine" evidence="1">
    <location>
        <position position="16"/>
    </location>
</feature>
<feature type="modified residue" description="Phosphoserine" evidence="1">
    <location>
        <position position="107"/>
    </location>
</feature>
<feature type="modified residue" description="Phosphoserine" evidence="1">
    <location>
        <position position="109"/>
    </location>
</feature>
<feature type="cross-link" description="Glycyl lysine isopeptide (Lys-Gly) (interchain with G-Cter in SUMO2)" evidence="1">
    <location>
        <position position="686"/>
    </location>
</feature>
<feature type="cross-link" description="Glycyl lysine isopeptide (Lys-Gly) (interchain with G-Cter in SUMO2)" evidence="1">
    <location>
        <position position="811"/>
    </location>
</feature>
<dbReference type="EC" id="3.6.4.13" evidence="6"/>
<dbReference type="EMBL" id="CR858413">
    <property type="protein sequence ID" value="CAH90640.1"/>
    <property type="molecule type" value="mRNA"/>
</dbReference>
<dbReference type="RefSeq" id="NP_001125347.1">
    <property type="nucleotide sequence ID" value="NM_001131875.1"/>
</dbReference>
<dbReference type="SMR" id="Q5RC67"/>
<dbReference type="STRING" id="9601.ENSPPYP00000005101"/>
<dbReference type="GeneID" id="100172249"/>
<dbReference type="KEGG" id="pon:100172249"/>
<dbReference type="CTD" id="9416"/>
<dbReference type="eggNOG" id="KOG0333">
    <property type="taxonomic scope" value="Eukaryota"/>
</dbReference>
<dbReference type="InParanoid" id="Q5RC67"/>
<dbReference type="OrthoDB" id="196131at2759"/>
<dbReference type="Proteomes" id="UP000001595">
    <property type="component" value="Unplaced"/>
</dbReference>
<dbReference type="GO" id="GO:0000785">
    <property type="term" value="C:chromatin"/>
    <property type="evidence" value="ECO:0000250"/>
    <property type="project" value="UniProtKB"/>
</dbReference>
<dbReference type="GO" id="GO:0005634">
    <property type="term" value="C:nucleus"/>
    <property type="evidence" value="ECO:0000250"/>
    <property type="project" value="UniProtKB"/>
</dbReference>
<dbReference type="GO" id="GO:0005681">
    <property type="term" value="C:spliceosomal complex"/>
    <property type="evidence" value="ECO:0007669"/>
    <property type="project" value="UniProtKB-KW"/>
</dbReference>
<dbReference type="GO" id="GO:0005524">
    <property type="term" value="F:ATP binding"/>
    <property type="evidence" value="ECO:0007669"/>
    <property type="project" value="UniProtKB-KW"/>
</dbReference>
<dbReference type="GO" id="GO:0016887">
    <property type="term" value="F:ATP hydrolysis activity"/>
    <property type="evidence" value="ECO:0007669"/>
    <property type="project" value="RHEA"/>
</dbReference>
<dbReference type="GO" id="GO:0003676">
    <property type="term" value="F:nucleic acid binding"/>
    <property type="evidence" value="ECO:0007669"/>
    <property type="project" value="InterPro"/>
</dbReference>
<dbReference type="GO" id="GO:0003724">
    <property type="term" value="F:RNA helicase activity"/>
    <property type="evidence" value="ECO:0007669"/>
    <property type="project" value="UniProtKB-EC"/>
</dbReference>
<dbReference type="GO" id="GO:0006397">
    <property type="term" value="P:mRNA processing"/>
    <property type="evidence" value="ECO:0007669"/>
    <property type="project" value="UniProtKB-KW"/>
</dbReference>
<dbReference type="GO" id="GO:0062176">
    <property type="term" value="P:R-loop processing"/>
    <property type="evidence" value="ECO:0000250"/>
    <property type="project" value="UniProtKB"/>
</dbReference>
<dbReference type="GO" id="GO:0008380">
    <property type="term" value="P:RNA splicing"/>
    <property type="evidence" value="ECO:0007669"/>
    <property type="project" value="UniProtKB-KW"/>
</dbReference>
<dbReference type="CDD" id="cd17945">
    <property type="entry name" value="DEADc_DDX23"/>
    <property type="match status" value="1"/>
</dbReference>
<dbReference type="CDD" id="cd18787">
    <property type="entry name" value="SF2_C_DEAD"/>
    <property type="match status" value="1"/>
</dbReference>
<dbReference type="FunFam" id="3.40.50.300:FF:000322">
    <property type="entry name" value="probable ATP-dependent RNA helicase DDX23"/>
    <property type="match status" value="1"/>
</dbReference>
<dbReference type="FunFam" id="3.40.50.300:FF:000520">
    <property type="entry name" value="probable ATP-dependent RNA helicase DDX23"/>
    <property type="match status" value="1"/>
</dbReference>
<dbReference type="Gene3D" id="3.40.50.300">
    <property type="entry name" value="P-loop containing nucleotide triphosphate hydrolases"/>
    <property type="match status" value="2"/>
</dbReference>
<dbReference type="InterPro" id="IPR011545">
    <property type="entry name" value="DEAD/DEAH_box_helicase_dom"/>
</dbReference>
<dbReference type="InterPro" id="IPR014001">
    <property type="entry name" value="Helicase_ATP-bd"/>
</dbReference>
<dbReference type="InterPro" id="IPR001650">
    <property type="entry name" value="Helicase_C-like"/>
</dbReference>
<dbReference type="InterPro" id="IPR027417">
    <property type="entry name" value="P-loop_NTPase"/>
</dbReference>
<dbReference type="InterPro" id="IPR000629">
    <property type="entry name" value="RNA-helicase_DEAD-box_CS"/>
</dbReference>
<dbReference type="InterPro" id="IPR014014">
    <property type="entry name" value="RNA_helicase_DEAD_Q_motif"/>
</dbReference>
<dbReference type="PANTHER" id="PTHR47958">
    <property type="entry name" value="ATP-DEPENDENT RNA HELICASE DBP3"/>
    <property type="match status" value="1"/>
</dbReference>
<dbReference type="Pfam" id="PF25430">
    <property type="entry name" value="DDX23"/>
    <property type="match status" value="1"/>
</dbReference>
<dbReference type="Pfam" id="PF00270">
    <property type="entry name" value="DEAD"/>
    <property type="match status" value="1"/>
</dbReference>
<dbReference type="Pfam" id="PF00271">
    <property type="entry name" value="Helicase_C"/>
    <property type="match status" value="1"/>
</dbReference>
<dbReference type="SMART" id="SM00487">
    <property type="entry name" value="DEXDc"/>
    <property type="match status" value="1"/>
</dbReference>
<dbReference type="SMART" id="SM00490">
    <property type="entry name" value="HELICc"/>
    <property type="match status" value="1"/>
</dbReference>
<dbReference type="SUPFAM" id="SSF52540">
    <property type="entry name" value="P-loop containing nucleoside triphosphate hydrolases"/>
    <property type="match status" value="1"/>
</dbReference>
<dbReference type="PROSITE" id="PS00039">
    <property type="entry name" value="DEAD_ATP_HELICASE"/>
    <property type="match status" value="1"/>
</dbReference>
<dbReference type="PROSITE" id="PS51192">
    <property type="entry name" value="HELICASE_ATP_BIND_1"/>
    <property type="match status" value="1"/>
</dbReference>
<dbReference type="PROSITE" id="PS51194">
    <property type="entry name" value="HELICASE_CTER"/>
    <property type="match status" value="1"/>
</dbReference>
<dbReference type="PROSITE" id="PS51195">
    <property type="entry name" value="Q_MOTIF"/>
    <property type="match status" value="1"/>
</dbReference>